<gene>
    <name evidence="1" type="primary">ilvC</name>
    <name type="ordered locus">GTNG_2588</name>
</gene>
<dbReference type="EC" id="1.1.1.86" evidence="1"/>
<dbReference type="EMBL" id="CP000557">
    <property type="protein sequence ID" value="ABO67933.1"/>
    <property type="molecule type" value="Genomic_DNA"/>
</dbReference>
<dbReference type="RefSeq" id="WP_011887925.1">
    <property type="nucleotide sequence ID" value="NC_009328.1"/>
</dbReference>
<dbReference type="SMR" id="A4IRH9"/>
<dbReference type="GeneID" id="87623264"/>
<dbReference type="KEGG" id="gtn:GTNG_2588"/>
<dbReference type="eggNOG" id="COG0059">
    <property type="taxonomic scope" value="Bacteria"/>
</dbReference>
<dbReference type="HOGENOM" id="CLU_033821_0_1_9"/>
<dbReference type="UniPathway" id="UPA00047">
    <property type="reaction ID" value="UER00056"/>
</dbReference>
<dbReference type="UniPathway" id="UPA00049">
    <property type="reaction ID" value="UER00060"/>
</dbReference>
<dbReference type="Proteomes" id="UP000001578">
    <property type="component" value="Chromosome"/>
</dbReference>
<dbReference type="GO" id="GO:0005829">
    <property type="term" value="C:cytosol"/>
    <property type="evidence" value="ECO:0007669"/>
    <property type="project" value="TreeGrafter"/>
</dbReference>
<dbReference type="GO" id="GO:0004455">
    <property type="term" value="F:ketol-acid reductoisomerase activity"/>
    <property type="evidence" value="ECO:0007669"/>
    <property type="project" value="UniProtKB-UniRule"/>
</dbReference>
<dbReference type="GO" id="GO:0000287">
    <property type="term" value="F:magnesium ion binding"/>
    <property type="evidence" value="ECO:0007669"/>
    <property type="project" value="UniProtKB-UniRule"/>
</dbReference>
<dbReference type="GO" id="GO:0050661">
    <property type="term" value="F:NADP binding"/>
    <property type="evidence" value="ECO:0007669"/>
    <property type="project" value="InterPro"/>
</dbReference>
<dbReference type="GO" id="GO:0009097">
    <property type="term" value="P:isoleucine biosynthetic process"/>
    <property type="evidence" value="ECO:0007669"/>
    <property type="project" value="UniProtKB-UniRule"/>
</dbReference>
<dbReference type="GO" id="GO:0009099">
    <property type="term" value="P:L-valine biosynthetic process"/>
    <property type="evidence" value="ECO:0007669"/>
    <property type="project" value="UniProtKB-UniRule"/>
</dbReference>
<dbReference type="FunFam" id="3.40.50.720:FF:000023">
    <property type="entry name" value="Ketol-acid reductoisomerase (NADP(+))"/>
    <property type="match status" value="1"/>
</dbReference>
<dbReference type="Gene3D" id="6.10.240.10">
    <property type="match status" value="1"/>
</dbReference>
<dbReference type="Gene3D" id="3.40.50.720">
    <property type="entry name" value="NAD(P)-binding Rossmann-like Domain"/>
    <property type="match status" value="1"/>
</dbReference>
<dbReference type="HAMAP" id="MF_00435">
    <property type="entry name" value="IlvC"/>
    <property type="match status" value="1"/>
</dbReference>
<dbReference type="InterPro" id="IPR008927">
    <property type="entry name" value="6-PGluconate_DH-like_C_sf"/>
</dbReference>
<dbReference type="InterPro" id="IPR013023">
    <property type="entry name" value="KARI"/>
</dbReference>
<dbReference type="InterPro" id="IPR000506">
    <property type="entry name" value="KARI_C"/>
</dbReference>
<dbReference type="InterPro" id="IPR013116">
    <property type="entry name" value="KARI_N"/>
</dbReference>
<dbReference type="InterPro" id="IPR014359">
    <property type="entry name" value="KARI_prok"/>
</dbReference>
<dbReference type="InterPro" id="IPR036291">
    <property type="entry name" value="NAD(P)-bd_dom_sf"/>
</dbReference>
<dbReference type="NCBIfam" id="TIGR00465">
    <property type="entry name" value="ilvC"/>
    <property type="match status" value="1"/>
</dbReference>
<dbReference type="NCBIfam" id="NF004017">
    <property type="entry name" value="PRK05479.1"/>
    <property type="match status" value="1"/>
</dbReference>
<dbReference type="NCBIfam" id="NF009940">
    <property type="entry name" value="PRK13403.1"/>
    <property type="match status" value="1"/>
</dbReference>
<dbReference type="PANTHER" id="PTHR21371">
    <property type="entry name" value="KETOL-ACID REDUCTOISOMERASE, MITOCHONDRIAL"/>
    <property type="match status" value="1"/>
</dbReference>
<dbReference type="PANTHER" id="PTHR21371:SF1">
    <property type="entry name" value="KETOL-ACID REDUCTOISOMERASE, MITOCHONDRIAL"/>
    <property type="match status" value="1"/>
</dbReference>
<dbReference type="Pfam" id="PF01450">
    <property type="entry name" value="KARI_C"/>
    <property type="match status" value="1"/>
</dbReference>
<dbReference type="Pfam" id="PF07991">
    <property type="entry name" value="KARI_N"/>
    <property type="match status" value="1"/>
</dbReference>
<dbReference type="PIRSF" id="PIRSF000116">
    <property type="entry name" value="IlvC_gammaproteo"/>
    <property type="match status" value="1"/>
</dbReference>
<dbReference type="SUPFAM" id="SSF48179">
    <property type="entry name" value="6-phosphogluconate dehydrogenase C-terminal domain-like"/>
    <property type="match status" value="1"/>
</dbReference>
<dbReference type="SUPFAM" id="SSF51735">
    <property type="entry name" value="NAD(P)-binding Rossmann-fold domains"/>
    <property type="match status" value="1"/>
</dbReference>
<dbReference type="PROSITE" id="PS51851">
    <property type="entry name" value="KARI_C"/>
    <property type="match status" value="1"/>
</dbReference>
<dbReference type="PROSITE" id="PS51850">
    <property type="entry name" value="KARI_N"/>
    <property type="match status" value="1"/>
</dbReference>
<sequence>MAKVYYNGDANEQYLQGKTVAIIGYGSQGHAHAQNLRDSGVHVIIGLRKGRSWEQAEQDGFDVYSVREASKKADIVMVLLPDEKQPAVYKEEIEPELKPGNALVFAHGFNIHFSQIVPPEHVDVFLVAPKGPGHLVRRTYVEGAGVPALIAVYQDVTGHAKETALAYAKAIGAARAGVLETTFKEETETDLFGEQAVLCGGLTALIKAGFETLVEAGYQPEVAYFECLHEMKLIVDLLYEGGLSWMRYSISDTAQWGDFTSGPRVINEAVKAEMKNILHDIQTGKFAKGWILENQANRPEFNAINQRENEHLIEVVGRELRSMMPFVKAKQKEVVVPGAKN</sequence>
<accession>A4IRH9</accession>
<protein>
    <recommendedName>
        <fullName evidence="1">Ketol-acid reductoisomerase (NADP(+))</fullName>
        <shortName evidence="1">KARI</shortName>
        <ecNumber evidence="1">1.1.1.86</ecNumber>
    </recommendedName>
    <alternativeName>
        <fullName evidence="1">Acetohydroxy-acid isomeroreductase</fullName>
        <shortName evidence="1">AHIR</shortName>
    </alternativeName>
    <alternativeName>
        <fullName evidence="1">Alpha-keto-beta-hydroxylacyl reductoisomerase</fullName>
    </alternativeName>
    <alternativeName>
        <fullName evidence="1">Ketol-acid reductoisomerase type 1</fullName>
    </alternativeName>
    <alternativeName>
        <fullName evidence="1">Ketol-acid reductoisomerase type I</fullName>
    </alternativeName>
</protein>
<name>ILVC_GEOTN</name>
<feature type="chain" id="PRO_1000050510" description="Ketol-acid reductoisomerase (NADP(+))">
    <location>
        <begin position="1"/>
        <end position="341"/>
    </location>
</feature>
<feature type="domain" description="KARI N-terminal Rossmann" evidence="2">
    <location>
        <begin position="2"/>
        <end position="181"/>
    </location>
</feature>
<feature type="domain" description="KARI C-terminal knotted" evidence="3">
    <location>
        <begin position="182"/>
        <end position="327"/>
    </location>
</feature>
<feature type="active site" evidence="1">
    <location>
        <position position="107"/>
    </location>
</feature>
<feature type="binding site" evidence="1">
    <location>
        <begin position="25"/>
        <end position="28"/>
    </location>
    <ligand>
        <name>NADP(+)</name>
        <dbReference type="ChEBI" id="CHEBI:58349"/>
    </ligand>
</feature>
<feature type="binding site" evidence="1">
    <location>
        <position position="48"/>
    </location>
    <ligand>
        <name>NADP(+)</name>
        <dbReference type="ChEBI" id="CHEBI:58349"/>
    </ligand>
</feature>
<feature type="binding site" evidence="1">
    <location>
        <position position="52"/>
    </location>
    <ligand>
        <name>NADP(+)</name>
        <dbReference type="ChEBI" id="CHEBI:58349"/>
    </ligand>
</feature>
<feature type="binding site" evidence="1">
    <location>
        <begin position="82"/>
        <end position="85"/>
    </location>
    <ligand>
        <name>NADP(+)</name>
        <dbReference type="ChEBI" id="CHEBI:58349"/>
    </ligand>
</feature>
<feature type="binding site" evidence="1">
    <location>
        <position position="133"/>
    </location>
    <ligand>
        <name>NADP(+)</name>
        <dbReference type="ChEBI" id="CHEBI:58349"/>
    </ligand>
</feature>
<feature type="binding site" evidence="1">
    <location>
        <position position="190"/>
    </location>
    <ligand>
        <name>Mg(2+)</name>
        <dbReference type="ChEBI" id="CHEBI:18420"/>
        <label>1</label>
    </ligand>
</feature>
<feature type="binding site" evidence="1">
    <location>
        <position position="190"/>
    </location>
    <ligand>
        <name>Mg(2+)</name>
        <dbReference type="ChEBI" id="CHEBI:18420"/>
        <label>2</label>
    </ligand>
</feature>
<feature type="binding site" evidence="1">
    <location>
        <position position="194"/>
    </location>
    <ligand>
        <name>Mg(2+)</name>
        <dbReference type="ChEBI" id="CHEBI:18420"/>
        <label>1</label>
    </ligand>
</feature>
<feature type="binding site" evidence="1">
    <location>
        <position position="226"/>
    </location>
    <ligand>
        <name>Mg(2+)</name>
        <dbReference type="ChEBI" id="CHEBI:18420"/>
        <label>2</label>
    </ligand>
</feature>
<feature type="binding site" evidence="1">
    <location>
        <position position="230"/>
    </location>
    <ligand>
        <name>Mg(2+)</name>
        <dbReference type="ChEBI" id="CHEBI:18420"/>
        <label>2</label>
    </ligand>
</feature>
<feature type="binding site" evidence="1">
    <location>
        <position position="251"/>
    </location>
    <ligand>
        <name>substrate</name>
    </ligand>
</feature>
<keyword id="KW-0028">Amino-acid biosynthesis</keyword>
<keyword id="KW-0100">Branched-chain amino acid biosynthesis</keyword>
<keyword id="KW-0460">Magnesium</keyword>
<keyword id="KW-0479">Metal-binding</keyword>
<keyword id="KW-0521">NADP</keyword>
<keyword id="KW-0560">Oxidoreductase</keyword>
<evidence type="ECO:0000255" key="1">
    <source>
        <dbReference type="HAMAP-Rule" id="MF_00435"/>
    </source>
</evidence>
<evidence type="ECO:0000255" key="2">
    <source>
        <dbReference type="PROSITE-ProRule" id="PRU01197"/>
    </source>
</evidence>
<evidence type="ECO:0000255" key="3">
    <source>
        <dbReference type="PROSITE-ProRule" id="PRU01198"/>
    </source>
</evidence>
<proteinExistence type="inferred from homology"/>
<comment type="function">
    <text evidence="1">Involved in the biosynthesis of branched-chain amino acids (BCAA). Catalyzes an alkyl-migration followed by a ketol-acid reduction of (S)-2-acetolactate (S2AL) to yield (R)-2,3-dihydroxy-isovalerate. In the isomerase reaction, S2AL is rearranged via a Mg-dependent methyl migration to produce 3-hydroxy-3-methyl-2-ketobutyrate (HMKB). In the reductase reaction, this 2-ketoacid undergoes a metal-dependent reduction by NADPH to yield (R)-2,3-dihydroxy-isovalerate.</text>
</comment>
<comment type="catalytic activity">
    <reaction evidence="1">
        <text>(2R)-2,3-dihydroxy-3-methylbutanoate + NADP(+) = (2S)-2-acetolactate + NADPH + H(+)</text>
        <dbReference type="Rhea" id="RHEA:22068"/>
        <dbReference type="ChEBI" id="CHEBI:15378"/>
        <dbReference type="ChEBI" id="CHEBI:49072"/>
        <dbReference type="ChEBI" id="CHEBI:57783"/>
        <dbReference type="ChEBI" id="CHEBI:58349"/>
        <dbReference type="ChEBI" id="CHEBI:58476"/>
        <dbReference type="EC" id="1.1.1.86"/>
    </reaction>
</comment>
<comment type="catalytic activity">
    <reaction evidence="1">
        <text>(2R,3R)-2,3-dihydroxy-3-methylpentanoate + NADP(+) = (S)-2-ethyl-2-hydroxy-3-oxobutanoate + NADPH + H(+)</text>
        <dbReference type="Rhea" id="RHEA:13493"/>
        <dbReference type="ChEBI" id="CHEBI:15378"/>
        <dbReference type="ChEBI" id="CHEBI:49256"/>
        <dbReference type="ChEBI" id="CHEBI:49258"/>
        <dbReference type="ChEBI" id="CHEBI:57783"/>
        <dbReference type="ChEBI" id="CHEBI:58349"/>
        <dbReference type="EC" id="1.1.1.86"/>
    </reaction>
</comment>
<comment type="cofactor">
    <cofactor evidence="1">
        <name>Mg(2+)</name>
        <dbReference type="ChEBI" id="CHEBI:18420"/>
    </cofactor>
    <text evidence="1">Binds 2 magnesium ions per subunit.</text>
</comment>
<comment type="pathway">
    <text evidence="1">Amino-acid biosynthesis; L-isoleucine biosynthesis; L-isoleucine from 2-oxobutanoate: step 2/4.</text>
</comment>
<comment type="pathway">
    <text evidence="1">Amino-acid biosynthesis; L-valine biosynthesis; L-valine from pyruvate: step 2/4.</text>
</comment>
<comment type="similarity">
    <text evidence="1">Belongs to the ketol-acid reductoisomerase family.</text>
</comment>
<reference key="1">
    <citation type="journal article" date="2007" name="Proc. Natl. Acad. Sci. U.S.A.">
        <title>Genome and proteome of long-chain alkane degrading Geobacillus thermodenitrificans NG80-2 isolated from a deep-subsurface oil reservoir.</title>
        <authorList>
            <person name="Feng L."/>
            <person name="Wang W."/>
            <person name="Cheng J."/>
            <person name="Ren Y."/>
            <person name="Zhao G."/>
            <person name="Gao C."/>
            <person name="Tang Y."/>
            <person name="Liu X."/>
            <person name="Han W."/>
            <person name="Peng X."/>
            <person name="Liu R."/>
            <person name="Wang L."/>
        </authorList>
    </citation>
    <scope>NUCLEOTIDE SEQUENCE [LARGE SCALE GENOMIC DNA]</scope>
    <source>
        <strain>NG80-2</strain>
    </source>
</reference>
<organism>
    <name type="scientific">Geobacillus thermodenitrificans (strain NG80-2)</name>
    <dbReference type="NCBI Taxonomy" id="420246"/>
    <lineage>
        <taxon>Bacteria</taxon>
        <taxon>Bacillati</taxon>
        <taxon>Bacillota</taxon>
        <taxon>Bacilli</taxon>
        <taxon>Bacillales</taxon>
        <taxon>Anoxybacillaceae</taxon>
        <taxon>Geobacillus</taxon>
    </lineage>
</organism>